<reference key="1">
    <citation type="submission" date="2007-11" db="EMBL/GenBank/DDBJ databases">
        <authorList>
            <consortium name="The Salmonella enterica serovar Paratyphi B Genome Sequencing Project"/>
            <person name="McClelland M."/>
            <person name="Sanderson E.K."/>
            <person name="Porwollik S."/>
            <person name="Spieth J."/>
            <person name="Clifton W.S."/>
            <person name="Fulton R."/>
            <person name="Cordes M."/>
            <person name="Wollam A."/>
            <person name="Shah N."/>
            <person name="Pepin K."/>
            <person name="Bhonagiri V."/>
            <person name="Nash W."/>
            <person name="Johnson M."/>
            <person name="Thiruvilangam P."/>
            <person name="Wilson R."/>
        </authorList>
    </citation>
    <scope>NUCLEOTIDE SEQUENCE [LARGE SCALE GENOMIC DNA]</scope>
    <source>
        <strain>ATCC BAA-1250 / SPB7</strain>
    </source>
</reference>
<organism>
    <name type="scientific">Salmonella paratyphi B (strain ATCC BAA-1250 / SPB7)</name>
    <dbReference type="NCBI Taxonomy" id="1016998"/>
    <lineage>
        <taxon>Bacteria</taxon>
        <taxon>Pseudomonadati</taxon>
        <taxon>Pseudomonadota</taxon>
        <taxon>Gammaproteobacteria</taxon>
        <taxon>Enterobacterales</taxon>
        <taxon>Enterobacteriaceae</taxon>
        <taxon>Salmonella</taxon>
    </lineage>
</organism>
<dbReference type="EC" id="2.7.1.2" evidence="1"/>
<dbReference type="EMBL" id="CP000886">
    <property type="protein sequence ID" value="ABX65984.1"/>
    <property type="molecule type" value="Genomic_DNA"/>
</dbReference>
<dbReference type="RefSeq" id="WP_000170378.1">
    <property type="nucleotide sequence ID" value="NC_010102.1"/>
</dbReference>
<dbReference type="SMR" id="A9N432"/>
<dbReference type="KEGG" id="spq:SPAB_00557"/>
<dbReference type="PATRIC" id="fig|1016998.12.peg.523"/>
<dbReference type="HOGENOM" id="CLU_042582_1_0_6"/>
<dbReference type="BioCyc" id="SENT1016998:SPAB_RS02305-MONOMER"/>
<dbReference type="Proteomes" id="UP000008556">
    <property type="component" value="Chromosome"/>
</dbReference>
<dbReference type="GO" id="GO:0005829">
    <property type="term" value="C:cytosol"/>
    <property type="evidence" value="ECO:0007669"/>
    <property type="project" value="TreeGrafter"/>
</dbReference>
<dbReference type="GO" id="GO:0005524">
    <property type="term" value="F:ATP binding"/>
    <property type="evidence" value="ECO:0007669"/>
    <property type="project" value="UniProtKB-UniRule"/>
</dbReference>
<dbReference type="GO" id="GO:0005536">
    <property type="term" value="F:D-glucose binding"/>
    <property type="evidence" value="ECO:0007669"/>
    <property type="project" value="InterPro"/>
</dbReference>
<dbReference type="GO" id="GO:0004340">
    <property type="term" value="F:glucokinase activity"/>
    <property type="evidence" value="ECO:0007669"/>
    <property type="project" value="UniProtKB-UniRule"/>
</dbReference>
<dbReference type="GO" id="GO:0006096">
    <property type="term" value="P:glycolytic process"/>
    <property type="evidence" value="ECO:0007669"/>
    <property type="project" value="UniProtKB-UniRule"/>
</dbReference>
<dbReference type="CDD" id="cd24008">
    <property type="entry name" value="ASKHA_NBD_GLK"/>
    <property type="match status" value="1"/>
</dbReference>
<dbReference type="FunFam" id="3.30.420.40:FF:000045">
    <property type="entry name" value="Glucokinase"/>
    <property type="match status" value="1"/>
</dbReference>
<dbReference type="FunFam" id="3.40.367.20:FF:000002">
    <property type="entry name" value="Glucokinase"/>
    <property type="match status" value="1"/>
</dbReference>
<dbReference type="Gene3D" id="3.30.420.40">
    <property type="match status" value="1"/>
</dbReference>
<dbReference type="Gene3D" id="3.40.367.20">
    <property type="match status" value="1"/>
</dbReference>
<dbReference type="HAMAP" id="MF_00524">
    <property type="entry name" value="Glucokinase"/>
    <property type="match status" value="1"/>
</dbReference>
<dbReference type="InterPro" id="IPR043129">
    <property type="entry name" value="ATPase_NBD"/>
</dbReference>
<dbReference type="InterPro" id="IPR050201">
    <property type="entry name" value="Bacterial_glucokinase"/>
</dbReference>
<dbReference type="InterPro" id="IPR003836">
    <property type="entry name" value="Glucokinase"/>
</dbReference>
<dbReference type="NCBIfam" id="TIGR00749">
    <property type="entry name" value="glk"/>
    <property type="match status" value="1"/>
</dbReference>
<dbReference type="NCBIfam" id="NF001414">
    <property type="entry name" value="PRK00292.1-1"/>
    <property type="match status" value="1"/>
</dbReference>
<dbReference type="NCBIfam" id="NF001416">
    <property type="entry name" value="PRK00292.1-3"/>
    <property type="match status" value="1"/>
</dbReference>
<dbReference type="PANTHER" id="PTHR47690">
    <property type="entry name" value="GLUCOKINASE"/>
    <property type="match status" value="1"/>
</dbReference>
<dbReference type="PANTHER" id="PTHR47690:SF1">
    <property type="entry name" value="GLUCOKINASE"/>
    <property type="match status" value="1"/>
</dbReference>
<dbReference type="Pfam" id="PF02685">
    <property type="entry name" value="Glucokinase"/>
    <property type="match status" value="1"/>
</dbReference>
<dbReference type="SUPFAM" id="SSF53067">
    <property type="entry name" value="Actin-like ATPase domain"/>
    <property type="match status" value="1"/>
</dbReference>
<accession>A9N432</accession>
<proteinExistence type="inferred from homology"/>
<keyword id="KW-0067">ATP-binding</keyword>
<keyword id="KW-0963">Cytoplasm</keyword>
<keyword id="KW-0324">Glycolysis</keyword>
<keyword id="KW-0418">Kinase</keyword>
<keyword id="KW-0547">Nucleotide-binding</keyword>
<keyword id="KW-0808">Transferase</keyword>
<evidence type="ECO:0000255" key="1">
    <source>
        <dbReference type="HAMAP-Rule" id="MF_00524"/>
    </source>
</evidence>
<protein>
    <recommendedName>
        <fullName evidence="1">Glucokinase</fullName>
        <ecNumber evidence="1">2.7.1.2</ecNumber>
    </recommendedName>
    <alternativeName>
        <fullName evidence="1">Glucose kinase</fullName>
    </alternativeName>
</protein>
<gene>
    <name evidence="1" type="primary">glk</name>
    <name type="ordered locus">SPAB_00557</name>
</gene>
<name>GLK_SALPB</name>
<sequence>MTKYALVGDVGGTNARLALCDIASGEISQAKTYSGLDYPSLEAVVRVYLDEHSVSVEDGCIAIACPITGDWVAMTNHTWAFSIAEMKKNLGFSHLEIINDFTAVSMAIPMLKKEHLIQFGGGEPVDGKPIAVYGAGTGLGVAHLVHVDKRWISLPGEGGHVDFAPNSEEEAMILEILRAEIGHVSAERVLSGPGLVNLYRAIVKSDNRLPENLRPKDITERALADSCIDCRRALSLFCVIMGRFGGDLALTMGTFGGVYIAGGIVPRFLEFFKASGFRGGFEDKGRFKDYIHGIPVYLIVHDNPGLLGSGAHLRQTLGHIL</sequence>
<comment type="catalytic activity">
    <reaction evidence="1">
        <text>D-glucose + ATP = D-glucose 6-phosphate + ADP + H(+)</text>
        <dbReference type="Rhea" id="RHEA:17825"/>
        <dbReference type="ChEBI" id="CHEBI:4167"/>
        <dbReference type="ChEBI" id="CHEBI:15378"/>
        <dbReference type="ChEBI" id="CHEBI:30616"/>
        <dbReference type="ChEBI" id="CHEBI:61548"/>
        <dbReference type="ChEBI" id="CHEBI:456216"/>
        <dbReference type="EC" id="2.7.1.2"/>
    </reaction>
</comment>
<comment type="subcellular location">
    <subcellularLocation>
        <location evidence="1">Cytoplasm</location>
    </subcellularLocation>
</comment>
<comment type="similarity">
    <text evidence="1">Belongs to the bacterial glucokinase family.</text>
</comment>
<feature type="chain" id="PRO_1000081698" description="Glucokinase">
    <location>
        <begin position="1"/>
        <end position="321"/>
    </location>
</feature>
<feature type="binding site" evidence="1">
    <location>
        <begin position="8"/>
        <end position="13"/>
    </location>
    <ligand>
        <name>ATP</name>
        <dbReference type="ChEBI" id="CHEBI:30616"/>
    </ligand>
</feature>